<name>TRPD_BRUSU</name>
<proteinExistence type="inferred from homology"/>
<feature type="chain" id="PRO_0000154433" description="Anthranilate phosphoribosyltransferase">
    <location>
        <begin position="1"/>
        <end position="339"/>
    </location>
</feature>
<feature type="binding site" evidence="1">
    <location>
        <position position="81"/>
    </location>
    <ligand>
        <name>5-phospho-alpha-D-ribose 1-diphosphate</name>
        <dbReference type="ChEBI" id="CHEBI:58017"/>
    </ligand>
</feature>
<feature type="binding site" evidence="1">
    <location>
        <position position="81"/>
    </location>
    <ligand>
        <name>anthranilate</name>
        <dbReference type="ChEBI" id="CHEBI:16567"/>
        <label>1</label>
    </ligand>
</feature>
<feature type="binding site" evidence="1">
    <location>
        <begin position="84"/>
        <end position="85"/>
    </location>
    <ligand>
        <name>5-phospho-alpha-D-ribose 1-diphosphate</name>
        <dbReference type="ChEBI" id="CHEBI:58017"/>
    </ligand>
</feature>
<feature type="binding site" evidence="1">
    <location>
        <position position="89"/>
    </location>
    <ligand>
        <name>5-phospho-alpha-D-ribose 1-diphosphate</name>
        <dbReference type="ChEBI" id="CHEBI:58017"/>
    </ligand>
</feature>
<feature type="binding site" evidence="1">
    <location>
        <begin position="91"/>
        <end position="94"/>
    </location>
    <ligand>
        <name>5-phospho-alpha-D-ribose 1-diphosphate</name>
        <dbReference type="ChEBI" id="CHEBI:58017"/>
    </ligand>
</feature>
<feature type="binding site" evidence="1">
    <location>
        <position position="93"/>
    </location>
    <ligand>
        <name>Mg(2+)</name>
        <dbReference type="ChEBI" id="CHEBI:18420"/>
        <label>1</label>
    </ligand>
</feature>
<feature type="binding site" evidence="1">
    <location>
        <begin position="109"/>
        <end position="117"/>
    </location>
    <ligand>
        <name>5-phospho-alpha-D-ribose 1-diphosphate</name>
        <dbReference type="ChEBI" id="CHEBI:58017"/>
    </ligand>
</feature>
<feature type="binding site" evidence="1">
    <location>
        <position position="112"/>
    </location>
    <ligand>
        <name>anthranilate</name>
        <dbReference type="ChEBI" id="CHEBI:16567"/>
        <label>1</label>
    </ligand>
</feature>
<feature type="binding site" evidence="1">
    <location>
        <position position="121"/>
    </location>
    <ligand>
        <name>5-phospho-alpha-D-ribose 1-diphosphate</name>
        <dbReference type="ChEBI" id="CHEBI:58017"/>
    </ligand>
</feature>
<feature type="binding site" evidence="1">
    <location>
        <position position="167"/>
    </location>
    <ligand>
        <name>anthranilate</name>
        <dbReference type="ChEBI" id="CHEBI:16567"/>
        <label>2</label>
    </ligand>
</feature>
<feature type="binding site" evidence="1">
    <location>
        <position position="225"/>
    </location>
    <ligand>
        <name>Mg(2+)</name>
        <dbReference type="ChEBI" id="CHEBI:18420"/>
        <label>2</label>
    </ligand>
</feature>
<feature type="binding site" evidence="1">
    <location>
        <position position="226"/>
    </location>
    <ligand>
        <name>Mg(2+)</name>
        <dbReference type="ChEBI" id="CHEBI:18420"/>
        <label>1</label>
    </ligand>
</feature>
<feature type="binding site" evidence="1">
    <location>
        <position position="226"/>
    </location>
    <ligand>
        <name>Mg(2+)</name>
        <dbReference type="ChEBI" id="CHEBI:18420"/>
        <label>2</label>
    </ligand>
</feature>
<protein>
    <recommendedName>
        <fullName evidence="1">Anthranilate phosphoribosyltransferase</fullName>
        <ecNumber evidence="1">2.4.2.18</ecNumber>
    </recommendedName>
</protein>
<keyword id="KW-0028">Amino-acid biosynthesis</keyword>
<keyword id="KW-0057">Aromatic amino acid biosynthesis</keyword>
<keyword id="KW-0328">Glycosyltransferase</keyword>
<keyword id="KW-0460">Magnesium</keyword>
<keyword id="KW-0479">Metal-binding</keyword>
<keyword id="KW-0808">Transferase</keyword>
<keyword id="KW-0822">Tryptophan biosynthesis</keyword>
<reference key="1">
    <citation type="journal article" date="2002" name="Proc. Natl. Acad. Sci. U.S.A.">
        <title>The Brucella suis genome reveals fundamental similarities between animal and plant pathogens and symbionts.</title>
        <authorList>
            <person name="Paulsen I.T."/>
            <person name="Seshadri R."/>
            <person name="Nelson K.E."/>
            <person name="Eisen J.A."/>
            <person name="Heidelberg J.F."/>
            <person name="Read T.D."/>
            <person name="Dodson R.J."/>
            <person name="Umayam L.A."/>
            <person name="Brinkac L.M."/>
            <person name="Beanan M.J."/>
            <person name="Daugherty S.C."/>
            <person name="DeBoy R.T."/>
            <person name="Durkin A.S."/>
            <person name="Kolonay J.F."/>
            <person name="Madupu R."/>
            <person name="Nelson W.C."/>
            <person name="Ayodeji B."/>
            <person name="Kraul M."/>
            <person name="Shetty J."/>
            <person name="Malek J.A."/>
            <person name="Van Aken S.E."/>
            <person name="Riedmuller S."/>
            <person name="Tettelin H."/>
            <person name="Gill S.R."/>
            <person name="White O."/>
            <person name="Salzberg S.L."/>
            <person name="Hoover D.L."/>
            <person name="Lindler L.E."/>
            <person name="Halling S.M."/>
            <person name="Boyle S.M."/>
            <person name="Fraser C.M."/>
        </authorList>
    </citation>
    <scope>NUCLEOTIDE SEQUENCE [LARGE SCALE GENOMIC DNA]</scope>
    <source>
        <strain>1330</strain>
    </source>
</reference>
<reference key="2">
    <citation type="journal article" date="2011" name="J. Bacteriol.">
        <title>Revised genome sequence of Brucella suis 1330.</title>
        <authorList>
            <person name="Tae H."/>
            <person name="Shallom S."/>
            <person name="Settlage R."/>
            <person name="Preston D."/>
            <person name="Adams L.G."/>
            <person name="Garner H.R."/>
        </authorList>
    </citation>
    <scope>NUCLEOTIDE SEQUENCE [LARGE SCALE GENOMIC DNA]</scope>
    <source>
        <strain>1330</strain>
    </source>
</reference>
<sequence length="339" mass="34859">MADLKPYIAKAASGEPLSLGDAKAAFDIMMSGQATPSQIGGFLMALRVRGETVPEIAGAVASMRSRMIPVIAPDDAMDIVGTGGDQSGSYNVSSCTAFVVAGAGVPVAKHGNRALSSRSGAADALAALGINIEADADTIGRSISEAGLGFMFAPMHHSAMRHVSPSRVELGTRTIFNLLGPLSNPASVKRQLVGVFAPQWLEPLAHVLKELGSETAWVVYGDGLDEMTTAGTTQVAALENGQIRTFEITPEEVGLRRCSPAELKGGEAAENAKALLGVLEGKDSAYRDIVLLNSGAALVVAGKAENLKDGIAQAVQSIDSGAALAVLQKVIAVSNDKPA</sequence>
<gene>
    <name evidence="1" type="primary">trpD</name>
    <name type="ordered locus">BR1140</name>
    <name type="ordered locus">BS1330_I1136</name>
</gene>
<evidence type="ECO:0000255" key="1">
    <source>
        <dbReference type="HAMAP-Rule" id="MF_00211"/>
    </source>
</evidence>
<dbReference type="EC" id="2.4.2.18" evidence="1"/>
<dbReference type="EMBL" id="AE014291">
    <property type="protein sequence ID" value="AAN30060.1"/>
    <property type="molecule type" value="Genomic_DNA"/>
</dbReference>
<dbReference type="EMBL" id="CP002997">
    <property type="protein sequence ID" value="AEM18478.1"/>
    <property type="molecule type" value="Genomic_DNA"/>
</dbReference>
<dbReference type="RefSeq" id="WP_006190478.1">
    <property type="nucleotide sequence ID" value="NZ_KN046804.1"/>
</dbReference>
<dbReference type="SMR" id="Q8G0F5"/>
<dbReference type="GeneID" id="45052183"/>
<dbReference type="KEGG" id="bms:BR1140"/>
<dbReference type="KEGG" id="bsi:BS1330_I1136"/>
<dbReference type="PATRIC" id="fig|204722.21.peg.1980"/>
<dbReference type="HOGENOM" id="CLU_034315_2_1_5"/>
<dbReference type="UniPathway" id="UPA00035">
    <property type="reaction ID" value="UER00041"/>
</dbReference>
<dbReference type="Proteomes" id="UP000007104">
    <property type="component" value="Chromosome I"/>
</dbReference>
<dbReference type="GO" id="GO:0005829">
    <property type="term" value="C:cytosol"/>
    <property type="evidence" value="ECO:0007669"/>
    <property type="project" value="TreeGrafter"/>
</dbReference>
<dbReference type="GO" id="GO:0004048">
    <property type="term" value="F:anthranilate phosphoribosyltransferase activity"/>
    <property type="evidence" value="ECO:0007669"/>
    <property type="project" value="UniProtKB-UniRule"/>
</dbReference>
<dbReference type="GO" id="GO:0000287">
    <property type="term" value="F:magnesium ion binding"/>
    <property type="evidence" value="ECO:0007669"/>
    <property type="project" value="UniProtKB-UniRule"/>
</dbReference>
<dbReference type="GO" id="GO:0000162">
    <property type="term" value="P:L-tryptophan biosynthetic process"/>
    <property type="evidence" value="ECO:0007669"/>
    <property type="project" value="UniProtKB-UniRule"/>
</dbReference>
<dbReference type="FunFam" id="3.40.1030.10:FF:000002">
    <property type="entry name" value="Anthranilate phosphoribosyltransferase"/>
    <property type="match status" value="1"/>
</dbReference>
<dbReference type="Gene3D" id="3.40.1030.10">
    <property type="entry name" value="Nucleoside phosphorylase/phosphoribosyltransferase catalytic domain"/>
    <property type="match status" value="1"/>
</dbReference>
<dbReference type="Gene3D" id="1.20.970.10">
    <property type="entry name" value="Transferase, Pyrimidine Nucleoside Phosphorylase, Chain C"/>
    <property type="match status" value="1"/>
</dbReference>
<dbReference type="HAMAP" id="MF_00211">
    <property type="entry name" value="TrpD"/>
    <property type="match status" value="1"/>
</dbReference>
<dbReference type="InterPro" id="IPR005940">
    <property type="entry name" value="Anthranilate_Pribosyl_Tfrase"/>
</dbReference>
<dbReference type="InterPro" id="IPR000312">
    <property type="entry name" value="Glycosyl_Trfase_fam3"/>
</dbReference>
<dbReference type="InterPro" id="IPR017459">
    <property type="entry name" value="Glycosyl_Trfase_fam3_N_dom"/>
</dbReference>
<dbReference type="InterPro" id="IPR036320">
    <property type="entry name" value="Glycosyl_Trfase_fam3_N_dom_sf"/>
</dbReference>
<dbReference type="InterPro" id="IPR035902">
    <property type="entry name" value="Nuc_phospho_transferase"/>
</dbReference>
<dbReference type="NCBIfam" id="TIGR01245">
    <property type="entry name" value="trpD"/>
    <property type="match status" value="1"/>
</dbReference>
<dbReference type="PANTHER" id="PTHR43285">
    <property type="entry name" value="ANTHRANILATE PHOSPHORIBOSYLTRANSFERASE"/>
    <property type="match status" value="1"/>
</dbReference>
<dbReference type="PANTHER" id="PTHR43285:SF2">
    <property type="entry name" value="ANTHRANILATE PHOSPHORIBOSYLTRANSFERASE"/>
    <property type="match status" value="1"/>
</dbReference>
<dbReference type="Pfam" id="PF02885">
    <property type="entry name" value="Glycos_trans_3N"/>
    <property type="match status" value="1"/>
</dbReference>
<dbReference type="Pfam" id="PF00591">
    <property type="entry name" value="Glycos_transf_3"/>
    <property type="match status" value="1"/>
</dbReference>
<dbReference type="SUPFAM" id="SSF52418">
    <property type="entry name" value="Nucleoside phosphorylase/phosphoribosyltransferase catalytic domain"/>
    <property type="match status" value="1"/>
</dbReference>
<dbReference type="SUPFAM" id="SSF47648">
    <property type="entry name" value="Nucleoside phosphorylase/phosphoribosyltransferase N-terminal domain"/>
    <property type="match status" value="1"/>
</dbReference>
<accession>Q8G0F5</accession>
<accession>G0KA62</accession>
<comment type="function">
    <text evidence="1">Catalyzes the transfer of the phosphoribosyl group of 5-phosphorylribose-1-pyrophosphate (PRPP) to anthranilate to yield N-(5'-phosphoribosyl)-anthranilate (PRA).</text>
</comment>
<comment type="catalytic activity">
    <reaction evidence="1">
        <text>N-(5-phospho-beta-D-ribosyl)anthranilate + diphosphate = 5-phospho-alpha-D-ribose 1-diphosphate + anthranilate</text>
        <dbReference type="Rhea" id="RHEA:11768"/>
        <dbReference type="ChEBI" id="CHEBI:16567"/>
        <dbReference type="ChEBI" id="CHEBI:18277"/>
        <dbReference type="ChEBI" id="CHEBI:33019"/>
        <dbReference type="ChEBI" id="CHEBI:58017"/>
        <dbReference type="EC" id="2.4.2.18"/>
    </reaction>
</comment>
<comment type="cofactor">
    <cofactor evidence="1">
        <name>Mg(2+)</name>
        <dbReference type="ChEBI" id="CHEBI:18420"/>
    </cofactor>
    <text evidence="1">Binds 2 magnesium ions per monomer.</text>
</comment>
<comment type="pathway">
    <text evidence="1">Amino-acid biosynthesis; L-tryptophan biosynthesis; L-tryptophan from chorismate: step 2/5.</text>
</comment>
<comment type="subunit">
    <text evidence="1">Homodimer.</text>
</comment>
<comment type="similarity">
    <text evidence="1">Belongs to the anthranilate phosphoribosyltransferase family.</text>
</comment>
<organism>
    <name type="scientific">Brucella suis biovar 1 (strain 1330)</name>
    <dbReference type="NCBI Taxonomy" id="204722"/>
    <lineage>
        <taxon>Bacteria</taxon>
        <taxon>Pseudomonadati</taxon>
        <taxon>Pseudomonadota</taxon>
        <taxon>Alphaproteobacteria</taxon>
        <taxon>Hyphomicrobiales</taxon>
        <taxon>Brucellaceae</taxon>
        <taxon>Brucella/Ochrobactrum group</taxon>
        <taxon>Brucella</taxon>
    </lineage>
</organism>